<accession>P22134</accession>
<accession>D3DM49</accession>
<keyword id="KW-0903">Direct protein sequencing</keyword>
<keyword id="KW-0227">DNA damage</keyword>
<keyword id="KW-0234">DNA repair</keyword>
<keyword id="KW-0378">Hydrolase</keyword>
<keyword id="KW-0539">Nucleus</keyword>
<keyword id="KW-0597">Phosphoprotein</keyword>
<keyword id="KW-1185">Reference proteome</keyword>
<dbReference type="EC" id="3.2.2.21"/>
<dbReference type="EMBL" id="X56662">
    <property type="protein sequence ID" value="CAA39989.1"/>
    <property type="molecule type" value="Genomic_DNA"/>
</dbReference>
<dbReference type="EMBL" id="X57781">
    <property type="protein sequence ID" value="CAA40927.1"/>
    <property type="molecule type" value="Genomic_DNA"/>
</dbReference>
<dbReference type="EMBL" id="U18917">
    <property type="protein sequence ID" value="AAB64669.1"/>
    <property type="molecule type" value="Genomic_DNA"/>
</dbReference>
<dbReference type="EMBL" id="AY692938">
    <property type="protein sequence ID" value="AAT92957.1"/>
    <property type="molecule type" value="Genomic_DNA"/>
</dbReference>
<dbReference type="EMBL" id="BK006939">
    <property type="protein sequence ID" value="DAA07803.1"/>
    <property type="molecule type" value="Genomic_DNA"/>
</dbReference>
<dbReference type="PIR" id="S12498">
    <property type="entry name" value="S12498"/>
</dbReference>
<dbReference type="RefSeq" id="NP_011069.1">
    <property type="nucleotide sequence ID" value="NM_001179032.1"/>
</dbReference>
<dbReference type="SMR" id="P22134"/>
<dbReference type="BioGRID" id="36891">
    <property type="interactions" value="124"/>
</dbReference>
<dbReference type="DIP" id="DIP-6599N"/>
<dbReference type="FunCoup" id="P22134">
    <property type="interactions" value="111"/>
</dbReference>
<dbReference type="IntAct" id="P22134">
    <property type="interactions" value="22"/>
</dbReference>
<dbReference type="STRING" id="4932.YER142C"/>
<dbReference type="iPTMnet" id="P22134"/>
<dbReference type="PaxDb" id="4932-YER142C"/>
<dbReference type="PeptideAtlas" id="P22134"/>
<dbReference type="EnsemblFungi" id="YER142C_mRNA">
    <property type="protein sequence ID" value="YER142C"/>
    <property type="gene ID" value="YER142C"/>
</dbReference>
<dbReference type="GeneID" id="856885"/>
<dbReference type="KEGG" id="sce:YER142C"/>
<dbReference type="AGR" id="SGD:S000000944"/>
<dbReference type="SGD" id="S000000944">
    <property type="gene designation" value="MAG1"/>
</dbReference>
<dbReference type="VEuPathDB" id="FungiDB:YER142C"/>
<dbReference type="eggNOG" id="KOG1918">
    <property type="taxonomic scope" value="Eukaryota"/>
</dbReference>
<dbReference type="GeneTree" id="ENSGT00640000091554"/>
<dbReference type="HOGENOM" id="CLU_000445_72_4_1"/>
<dbReference type="InParanoid" id="P22134"/>
<dbReference type="OMA" id="FMFILWR"/>
<dbReference type="OrthoDB" id="415889at2759"/>
<dbReference type="BioCyc" id="YEAST:G3O-30303-MONOMER"/>
<dbReference type="BioGRID-ORCS" id="856885">
    <property type="hits" value="0 hits in 10 CRISPR screens"/>
</dbReference>
<dbReference type="PRO" id="PR:P22134"/>
<dbReference type="Proteomes" id="UP000002311">
    <property type="component" value="Chromosome V"/>
</dbReference>
<dbReference type="RNAct" id="P22134">
    <property type="molecule type" value="protein"/>
</dbReference>
<dbReference type="GO" id="GO:0005634">
    <property type="term" value="C:nucleus"/>
    <property type="evidence" value="ECO:0000318"/>
    <property type="project" value="GO_Central"/>
</dbReference>
<dbReference type="GO" id="GO:0032993">
    <property type="term" value="C:protein-DNA complex"/>
    <property type="evidence" value="ECO:0000318"/>
    <property type="project" value="GO_Central"/>
</dbReference>
<dbReference type="GO" id="GO:0032131">
    <property type="term" value="F:alkylated DNA binding"/>
    <property type="evidence" value="ECO:0000318"/>
    <property type="project" value="GO_Central"/>
</dbReference>
<dbReference type="GO" id="GO:0003905">
    <property type="term" value="F:alkylbase DNA N-glycosylase activity"/>
    <property type="evidence" value="ECO:0000314"/>
    <property type="project" value="SGD"/>
</dbReference>
<dbReference type="GO" id="GO:0003684">
    <property type="term" value="F:damaged DNA binding"/>
    <property type="evidence" value="ECO:0000314"/>
    <property type="project" value="SGD"/>
</dbReference>
<dbReference type="GO" id="GO:0008725">
    <property type="term" value="F:DNA-3-methyladenine glycosylase activity"/>
    <property type="evidence" value="ECO:0000314"/>
    <property type="project" value="SGD"/>
</dbReference>
<dbReference type="GO" id="GO:0043916">
    <property type="term" value="F:DNA-7-methylguanine glycosylase activity"/>
    <property type="evidence" value="ECO:0000318"/>
    <property type="project" value="GO_Central"/>
</dbReference>
<dbReference type="GO" id="GO:0006285">
    <property type="term" value="P:base-excision repair, AP site formation"/>
    <property type="evidence" value="ECO:0000315"/>
    <property type="project" value="SGD"/>
</dbReference>
<dbReference type="GO" id="GO:0006307">
    <property type="term" value="P:DNA alkylation repair"/>
    <property type="evidence" value="ECO:0000315"/>
    <property type="project" value="SGD"/>
</dbReference>
<dbReference type="CDD" id="cd00056">
    <property type="entry name" value="ENDO3c"/>
    <property type="match status" value="1"/>
</dbReference>
<dbReference type="FunFam" id="1.10.340.30:FF:000024">
    <property type="entry name" value="DNA-3-methyladenine glycosylase"/>
    <property type="match status" value="1"/>
</dbReference>
<dbReference type="Gene3D" id="1.10.1670.40">
    <property type="match status" value="1"/>
</dbReference>
<dbReference type="Gene3D" id="1.10.340.30">
    <property type="entry name" value="Hypothetical protein, domain 2"/>
    <property type="match status" value="1"/>
</dbReference>
<dbReference type="InterPro" id="IPR051912">
    <property type="entry name" value="Alkylbase_DNA_Glycosylase/TA"/>
</dbReference>
<dbReference type="InterPro" id="IPR000035">
    <property type="entry name" value="Alkylbase_DNA_glycsylse_CS"/>
</dbReference>
<dbReference type="InterPro" id="IPR011257">
    <property type="entry name" value="DNA_glycosylase"/>
</dbReference>
<dbReference type="InterPro" id="IPR003265">
    <property type="entry name" value="HhH-GPD_domain"/>
</dbReference>
<dbReference type="PANTHER" id="PTHR43003">
    <property type="entry name" value="DNA-3-METHYLADENINE GLYCOSYLASE"/>
    <property type="match status" value="1"/>
</dbReference>
<dbReference type="PANTHER" id="PTHR43003:SF5">
    <property type="entry name" value="DNA-3-METHYLADENINE GLYCOSYLASE"/>
    <property type="match status" value="1"/>
</dbReference>
<dbReference type="Pfam" id="PF00730">
    <property type="entry name" value="HhH-GPD"/>
    <property type="match status" value="1"/>
</dbReference>
<dbReference type="SMART" id="SM00478">
    <property type="entry name" value="ENDO3c"/>
    <property type="match status" value="1"/>
</dbReference>
<dbReference type="SUPFAM" id="SSF48150">
    <property type="entry name" value="DNA-glycosylase"/>
    <property type="match status" value="1"/>
</dbReference>
<dbReference type="PROSITE" id="PS00516">
    <property type="entry name" value="ALKYLBASE_DNA_GLYCOS"/>
    <property type="match status" value="1"/>
</dbReference>
<proteinExistence type="evidence at protein level"/>
<gene>
    <name type="primary">MAG1</name>
    <name type="synonym">MAG</name>
    <name type="ordered locus">YER142C</name>
</gene>
<sequence>MKLKREYDELIKADAVKEIAKELGSRPLEVALPEKYIARHEEKFNMACEHILEKDPSLFPILKNNEFTLYLKETQVPNTLEDYFIRLASTILSQQISGQAAESIKARVVSLYGGAFPDYKILFEDFKDPAKCAEIAKCGLSKRKMIYLESLAVYFTEKYKDIEKLFGQKDNDEEVIESLVTNVKGIGPWSAKMFLISGLKRMDVFAPEDLGIARGFSKYLSDKPELEKELMRERKVVKKSKIKHKKYNWKIYDDDIMEKCSETFSPYRSVFMFILWRLASTNTDAMMKAEENFVKS</sequence>
<protein>
    <recommendedName>
        <fullName>DNA-3-methyladenine glycosylase</fullName>
        <ecNumber>3.2.2.21</ecNumber>
    </recommendedName>
    <alternativeName>
        <fullName>3-methyladenine DNA glycosidase</fullName>
    </alternativeName>
    <alternativeName>
        <fullName>3MEA DNA glycosylase</fullName>
    </alternativeName>
</protein>
<organism>
    <name type="scientific">Saccharomyces cerevisiae (strain ATCC 204508 / S288c)</name>
    <name type="common">Baker's yeast</name>
    <dbReference type="NCBI Taxonomy" id="559292"/>
    <lineage>
        <taxon>Eukaryota</taxon>
        <taxon>Fungi</taxon>
        <taxon>Dikarya</taxon>
        <taxon>Ascomycota</taxon>
        <taxon>Saccharomycotina</taxon>
        <taxon>Saccharomycetes</taxon>
        <taxon>Saccharomycetales</taxon>
        <taxon>Saccharomycetaceae</taxon>
        <taxon>Saccharomyces</taxon>
    </lineage>
</organism>
<feature type="chain" id="PRO_0000194883" description="DNA-3-methyladenine glycosylase">
    <location>
        <begin position="1"/>
        <end position="296"/>
    </location>
</feature>
<feature type="active site" description="Proton acceptor" evidence="1">
    <location>
        <position position="209"/>
    </location>
</feature>
<feature type="site" description="Determinant for substrate specificity and/or activity" evidence="1">
    <location>
        <position position="189"/>
    </location>
</feature>
<feature type="modified residue" description="Phosphoserine" evidence="4">
    <location>
        <position position="110"/>
    </location>
</feature>
<comment type="function">
    <text>Hydrolysis of the deoxyribose N-glycosidic bond to excise 3-methyladenine or 7-methyladenine from the damaged DNA polymer formed by alkylation lesions.</text>
</comment>
<comment type="catalytic activity">
    <reaction>
        <text>Hydrolysis of alkylated DNA, releasing 3-methyladenine, 3-methylguanine, 7-methylguanine and 7-methyladenine.</text>
        <dbReference type="EC" id="3.2.2.21"/>
    </reaction>
</comment>
<comment type="subcellular location">
    <subcellularLocation>
        <location evidence="2">Nucleus</location>
    </subcellularLocation>
</comment>
<comment type="induction">
    <text>By DNA damage.</text>
</comment>
<comment type="similarity">
    <text evidence="3">Belongs to the alkylbase DNA glycosidase AlkA family.</text>
</comment>
<evidence type="ECO:0000250" key="1"/>
<evidence type="ECO:0000269" key="2">
    <source>
    </source>
</evidence>
<evidence type="ECO:0000305" key="3"/>
<evidence type="ECO:0007744" key="4">
    <source>
    </source>
</evidence>
<name>MAG_YEAST</name>
<reference key="1">
    <citation type="journal article" date="1990" name="EMBO J.">
        <title>Cloning and expression in Escherichia coli of a gene for an alkylbase DNA glycosylase from Saccharomyces cerevisiae; a homologue to the bacterial alkA gene.</title>
        <authorList>
            <person name="Berdal K.G."/>
            <person name="Bjoeraas M."/>
            <person name="Bjelland S."/>
            <person name="Seeberg E.C."/>
        </authorList>
    </citation>
    <scope>NUCLEOTIDE SEQUENCE [GENOMIC DNA]</scope>
</reference>
<reference key="2">
    <citation type="journal article" date="1990" name="EMBO J.">
        <title>Saccharomyces cerevisiae 3-methyladenine DNA glycosylase has homology to the AlkA glycosylase of E. coli and is induced in response to DNA alkylation damage.</title>
        <authorList>
            <person name="Chen J."/>
            <person name="Derfler B."/>
            <person name="Samson L."/>
        </authorList>
    </citation>
    <scope>NUCLEOTIDE SEQUENCE [GENOMIC DNA]</scope>
</reference>
<reference key="3">
    <citation type="journal article" date="1997" name="Nature">
        <title>The nucleotide sequence of Saccharomyces cerevisiae chromosome V.</title>
        <authorList>
            <person name="Dietrich F.S."/>
            <person name="Mulligan J.T."/>
            <person name="Hennessy K.M."/>
            <person name="Yelton M.A."/>
            <person name="Allen E."/>
            <person name="Araujo R."/>
            <person name="Aviles E."/>
            <person name="Berno A."/>
            <person name="Brennan T."/>
            <person name="Carpenter J."/>
            <person name="Chen E."/>
            <person name="Cherry J.M."/>
            <person name="Chung E."/>
            <person name="Duncan M."/>
            <person name="Guzman E."/>
            <person name="Hartzell G."/>
            <person name="Hunicke-Smith S."/>
            <person name="Hyman R.W."/>
            <person name="Kayser A."/>
            <person name="Komp C."/>
            <person name="Lashkari D."/>
            <person name="Lew H."/>
            <person name="Lin D."/>
            <person name="Mosedale D."/>
            <person name="Nakahara K."/>
            <person name="Namath A."/>
            <person name="Norgren R."/>
            <person name="Oefner P."/>
            <person name="Oh C."/>
            <person name="Petel F.X."/>
            <person name="Roberts D."/>
            <person name="Sehl P."/>
            <person name="Schramm S."/>
            <person name="Shogren T."/>
            <person name="Smith V."/>
            <person name="Taylor P."/>
            <person name="Wei Y."/>
            <person name="Botstein D."/>
            <person name="Davis R.W."/>
        </authorList>
    </citation>
    <scope>NUCLEOTIDE SEQUENCE [LARGE SCALE GENOMIC DNA]</scope>
    <source>
        <strain>ATCC 204508 / S288c</strain>
    </source>
</reference>
<reference key="4">
    <citation type="journal article" date="2014" name="G3 (Bethesda)">
        <title>The reference genome sequence of Saccharomyces cerevisiae: Then and now.</title>
        <authorList>
            <person name="Engel S.R."/>
            <person name="Dietrich F.S."/>
            <person name="Fisk D.G."/>
            <person name="Binkley G."/>
            <person name="Balakrishnan R."/>
            <person name="Costanzo M.C."/>
            <person name="Dwight S.S."/>
            <person name="Hitz B.C."/>
            <person name="Karra K."/>
            <person name="Nash R.S."/>
            <person name="Weng S."/>
            <person name="Wong E.D."/>
            <person name="Lloyd P."/>
            <person name="Skrzypek M.S."/>
            <person name="Miyasato S.R."/>
            <person name="Simison M."/>
            <person name="Cherry J.M."/>
        </authorList>
    </citation>
    <scope>GENOME REANNOTATION</scope>
    <source>
        <strain>ATCC 204508 / S288c</strain>
    </source>
</reference>
<reference key="5">
    <citation type="journal article" date="2007" name="Genome Res.">
        <title>Approaching a complete repository of sequence-verified protein-encoding clones for Saccharomyces cerevisiae.</title>
        <authorList>
            <person name="Hu Y."/>
            <person name="Rolfs A."/>
            <person name="Bhullar B."/>
            <person name="Murthy T.V.S."/>
            <person name="Zhu C."/>
            <person name="Berger M.F."/>
            <person name="Camargo A.A."/>
            <person name="Kelley F."/>
            <person name="McCarron S."/>
            <person name="Jepson D."/>
            <person name="Richardson A."/>
            <person name="Raphael J."/>
            <person name="Moreira D."/>
            <person name="Taycher E."/>
            <person name="Zuo D."/>
            <person name="Mohr S."/>
            <person name="Kane M.F."/>
            <person name="Williamson J."/>
            <person name="Simpson A.J.G."/>
            <person name="Bulyk M.L."/>
            <person name="Harlow E."/>
            <person name="Marsischky G."/>
            <person name="Kolodner R.D."/>
            <person name="LaBaer J."/>
        </authorList>
    </citation>
    <scope>NUCLEOTIDE SEQUENCE [GENOMIC DNA]</scope>
    <source>
        <strain>ATCC 204508 / S288c</strain>
    </source>
</reference>
<reference key="6">
    <citation type="journal article" date="1995" name="Biochemistry">
        <title>Purification and properties of the alkylation repair DNA glycosylase encoded the MAG gene from Saccharomyces cerevisiae.</title>
        <authorList>
            <person name="Bjoras M."/>
            <person name="Klungland A."/>
            <person name="Johansen R.F."/>
            <person name="Seeberg E."/>
        </authorList>
    </citation>
    <scope>PROTEIN SEQUENCE OF 1-11</scope>
</reference>
<reference key="7">
    <citation type="journal article" date="2001" name="Biochemistry">
        <title>Yeast mitochondrial dehydrogenases are associated in a supramolecular complex.</title>
        <authorList>
            <person name="Grandier-Vazeille X."/>
            <person name="Bathany K."/>
            <person name="Chaignepain S."/>
            <person name="Camougrand N."/>
            <person name="Manon S."/>
            <person name="Schmitter J.-M."/>
        </authorList>
    </citation>
    <scope>SUBCELLULAR LOCATION</scope>
</reference>
<reference key="8">
    <citation type="journal article" date="2008" name="Mol. Cell. Proteomics">
        <title>A multidimensional chromatography technology for in-depth phosphoproteome analysis.</title>
        <authorList>
            <person name="Albuquerque C.P."/>
            <person name="Smolka M.B."/>
            <person name="Payne S.H."/>
            <person name="Bafna V."/>
            <person name="Eng J."/>
            <person name="Zhou H."/>
        </authorList>
    </citation>
    <scope>PHOSPHORYLATION [LARGE SCALE ANALYSIS] AT SER-110</scope>
    <scope>IDENTIFICATION BY MASS SPECTROMETRY [LARGE SCALE ANALYSIS]</scope>
</reference>